<sequence>MAAKDVKFGRTAREKMLRGVDILADAVKVTLGPKGRNVVIDKSFGAPRITKDGVSVAKEVELEDKFENMGAQMLREVASKTNDTAGDGTTTATVLGQAIVQEGAKAVAAGMNPMDLKRGIDLAVNEVVAELLKKAKKINTSEEVAQVGTISANGEAEIGKMIAEAMQKVGNEGVITVEEAKTAETELEVVEGMQFDRGYLSPYFVTNPEKMVADLEDAYILLHEKKLSNLQALLPVLEAVVQTSKPLLIIAEDVEGEALATLVVNKLRGGLKIAAVKAPGFGDRRKAMLEDIAILTGGQVISEDLGIKLESVTLDMLGRAKKVSISKENTTIVDGAGQKAEIDARVGQIKQQIEETTSDYDREKLQERLAKLAGGVAVIRVGGATEVEVKEKKDRVDDALNATRAAVEEGIVAGGGTALLRASTKITAKGVNADQEAGINIVRRAIQAPARQITTNAGEEASVIVGKILENTSETFGYNTANGEYGDLISLGIVDPVKVVRTALQNAASVAGLLITTEAMIAELPKKDAAPAGMPGGMGGMGGMDF</sequence>
<organism>
    <name type="scientific">Brucella suis (strain ATCC 23445 / NCTC 10510)</name>
    <dbReference type="NCBI Taxonomy" id="470137"/>
    <lineage>
        <taxon>Bacteria</taxon>
        <taxon>Pseudomonadati</taxon>
        <taxon>Pseudomonadota</taxon>
        <taxon>Alphaproteobacteria</taxon>
        <taxon>Hyphomicrobiales</taxon>
        <taxon>Brucellaceae</taxon>
        <taxon>Brucella/Ochrobactrum group</taxon>
        <taxon>Brucella</taxon>
    </lineage>
</organism>
<keyword id="KW-0067">ATP-binding</keyword>
<keyword id="KW-0143">Chaperone</keyword>
<keyword id="KW-0963">Cytoplasm</keyword>
<keyword id="KW-0413">Isomerase</keyword>
<keyword id="KW-0547">Nucleotide-binding</keyword>
<evidence type="ECO:0000255" key="1">
    <source>
        <dbReference type="HAMAP-Rule" id="MF_00600"/>
    </source>
</evidence>
<gene>
    <name evidence="1" type="primary">groEL</name>
    <name evidence="1" type="synonym">groL</name>
    <name type="ordered locus">BSUIS_B0198</name>
</gene>
<reference key="1">
    <citation type="submission" date="2007-12" db="EMBL/GenBank/DDBJ databases">
        <title>Brucella suis ATCC 23445 whole genome shotgun sequencing project.</title>
        <authorList>
            <person name="Setubal J.C."/>
            <person name="Bowns C."/>
            <person name="Boyle S."/>
            <person name="Crasta O.R."/>
            <person name="Czar M.J."/>
            <person name="Dharmanolla C."/>
            <person name="Gillespie J.J."/>
            <person name="Kenyon R.W."/>
            <person name="Lu J."/>
            <person name="Mane S."/>
            <person name="Mohapatra S."/>
            <person name="Nagrani S."/>
            <person name="Purkayastha A."/>
            <person name="Rajasimha H.K."/>
            <person name="Shallom J.M."/>
            <person name="Shallom S."/>
            <person name="Shukla M."/>
            <person name="Snyder E.E."/>
            <person name="Sobral B.W."/>
            <person name="Wattam A.R."/>
            <person name="Will R."/>
            <person name="Williams K."/>
            <person name="Yoo H."/>
            <person name="Bruce D."/>
            <person name="Detter C."/>
            <person name="Munk C."/>
            <person name="Brettin T.S."/>
        </authorList>
    </citation>
    <scope>NUCLEOTIDE SEQUENCE [LARGE SCALE GENOMIC DNA]</scope>
    <source>
        <strain>ATCC 23445 / NCTC 10510</strain>
    </source>
</reference>
<feature type="chain" id="PRO_1000082464" description="Chaperonin GroEL">
    <location>
        <begin position="1"/>
        <end position="546"/>
    </location>
</feature>
<feature type="binding site" evidence="1">
    <location>
        <begin position="30"/>
        <end position="33"/>
    </location>
    <ligand>
        <name>ATP</name>
        <dbReference type="ChEBI" id="CHEBI:30616"/>
    </ligand>
</feature>
<feature type="binding site" evidence="1">
    <location>
        <position position="51"/>
    </location>
    <ligand>
        <name>ATP</name>
        <dbReference type="ChEBI" id="CHEBI:30616"/>
    </ligand>
</feature>
<feature type="binding site" evidence="1">
    <location>
        <begin position="87"/>
        <end position="91"/>
    </location>
    <ligand>
        <name>ATP</name>
        <dbReference type="ChEBI" id="CHEBI:30616"/>
    </ligand>
</feature>
<feature type="binding site" evidence="1">
    <location>
        <position position="415"/>
    </location>
    <ligand>
        <name>ATP</name>
        <dbReference type="ChEBI" id="CHEBI:30616"/>
    </ligand>
</feature>
<feature type="binding site" evidence="1">
    <location>
        <position position="495"/>
    </location>
    <ligand>
        <name>ATP</name>
        <dbReference type="ChEBI" id="CHEBI:30616"/>
    </ligand>
</feature>
<dbReference type="EC" id="5.6.1.7" evidence="1"/>
<dbReference type="EMBL" id="CP000912">
    <property type="protein sequence ID" value="ABY39216.1"/>
    <property type="molecule type" value="Genomic_DNA"/>
</dbReference>
<dbReference type="RefSeq" id="WP_004688851.1">
    <property type="nucleotide sequence ID" value="NC_010167.1"/>
</dbReference>
<dbReference type="SMR" id="A9WXQ0"/>
<dbReference type="GeneID" id="55591910"/>
<dbReference type="KEGG" id="bmt:BSUIS_B0198"/>
<dbReference type="HOGENOM" id="CLU_016503_3_0_5"/>
<dbReference type="Proteomes" id="UP000008545">
    <property type="component" value="Chromosome II"/>
</dbReference>
<dbReference type="GO" id="GO:0005737">
    <property type="term" value="C:cytoplasm"/>
    <property type="evidence" value="ECO:0007669"/>
    <property type="project" value="UniProtKB-SubCell"/>
</dbReference>
<dbReference type="GO" id="GO:0005524">
    <property type="term" value="F:ATP binding"/>
    <property type="evidence" value="ECO:0007669"/>
    <property type="project" value="UniProtKB-UniRule"/>
</dbReference>
<dbReference type="GO" id="GO:0140662">
    <property type="term" value="F:ATP-dependent protein folding chaperone"/>
    <property type="evidence" value="ECO:0007669"/>
    <property type="project" value="InterPro"/>
</dbReference>
<dbReference type="GO" id="GO:0016853">
    <property type="term" value="F:isomerase activity"/>
    <property type="evidence" value="ECO:0007669"/>
    <property type="project" value="UniProtKB-KW"/>
</dbReference>
<dbReference type="GO" id="GO:0051082">
    <property type="term" value="F:unfolded protein binding"/>
    <property type="evidence" value="ECO:0007669"/>
    <property type="project" value="UniProtKB-UniRule"/>
</dbReference>
<dbReference type="GO" id="GO:0042026">
    <property type="term" value="P:protein refolding"/>
    <property type="evidence" value="ECO:0007669"/>
    <property type="project" value="UniProtKB-UniRule"/>
</dbReference>
<dbReference type="CDD" id="cd03344">
    <property type="entry name" value="GroEL"/>
    <property type="match status" value="1"/>
</dbReference>
<dbReference type="FunFam" id="1.10.560.10:FF:000001">
    <property type="entry name" value="60 kDa chaperonin"/>
    <property type="match status" value="1"/>
</dbReference>
<dbReference type="FunFam" id="3.50.7.10:FF:000001">
    <property type="entry name" value="60 kDa chaperonin"/>
    <property type="match status" value="1"/>
</dbReference>
<dbReference type="Gene3D" id="3.50.7.10">
    <property type="entry name" value="GroEL"/>
    <property type="match status" value="1"/>
</dbReference>
<dbReference type="Gene3D" id="1.10.560.10">
    <property type="entry name" value="GroEL-like equatorial domain"/>
    <property type="match status" value="1"/>
</dbReference>
<dbReference type="Gene3D" id="3.30.260.10">
    <property type="entry name" value="TCP-1-like chaperonin intermediate domain"/>
    <property type="match status" value="1"/>
</dbReference>
<dbReference type="HAMAP" id="MF_00600">
    <property type="entry name" value="CH60"/>
    <property type="match status" value="1"/>
</dbReference>
<dbReference type="InterPro" id="IPR018370">
    <property type="entry name" value="Chaperonin_Cpn60_CS"/>
</dbReference>
<dbReference type="InterPro" id="IPR001844">
    <property type="entry name" value="Cpn60/GroEL"/>
</dbReference>
<dbReference type="InterPro" id="IPR002423">
    <property type="entry name" value="Cpn60/GroEL/TCP-1"/>
</dbReference>
<dbReference type="InterPro" id="IPR027409">
    <property type="entry name" value="GroEL-like_apical_dom_sf"/>
</dbReference>
<dbReference type="InterPro" id="IPR027413">
    <property type="entry name" value="GROEL-like_equatorial_sf"/>
</dbReference>
<dbReference type="InterPro" id="IPR027410">
    <property type="entry name" value="TCP-1-like_intermed_sf"/>
</dbReference>
<dbReference type="NCBIfam" id="TIGR02348">
    <property type="entry name" value="GroEL"/>
    <property type="match status" value="1"/>
</dbReference>
<dbReference type="NCBIfam" id="NF000592">
    <property type="entry name" value="PRK00013.1"/>
    <property type="match status" value="1"/>
</dbReference>
<dbReference type="NCBIfam" id="NF009487">
    <property type="entry name" value="PRK12849.1"/>
    <property type="match status" value="1"/>
</dbReference>
<dbReference type="NCBIfam" id="NF009488">
    <property type="entry name" value="PRK12850.1"/>
    <property type="match status" value="1"/>
</dbReference>
<dbReference type="NCBIfam" id="NF009489">
    <property type="entry name" value="PRK12851.1"/>
    <property type="match status" value="1"/>
</dbReference>
<dbReference type="PANTHER" id="PTHR45633">
    <property type="entry name" value="60 KDA HEAT SHOCK PROTEIN, MITOCHONDRIAL"/>
    <property type="match status" value="1"/>
</dbReference>
<dbReference type="Pfam" id="PF00118">
    <property type="entry name" value="Cpn60_TCP1"/>
    <property type="match status" value="1"/>
</dbReference>
<dbReference type="PRINTS" id="PR00298">
    <property type="entry name" value="CHAPERONIN60"/>
</dbReference>
<dbReference type="SUPFAM" id="SSF52029">
    <property type="entry name" value="GroEL apical domain-like"/>
    <property type="match status" value="1"/>
</dbReference>
<dbReference type="SUPFAM" id="SSF48592">
    <property type="entry name" value="GroEL equatorial domain-like"/>
    <property type="match status" value="1"/>
</dbReference>
<dbReference type="SUPFAM" id="SSF54849">
    <property type="entry name" value="GroEL-intermediate domain like"/>
    <property type="match status" value="1"/>
</dbReference>
<dbReference type="PROSITE" id="PS00296">
    <property type="entry name" value="CHAPERONINS_CPN60"/>
    <property type="match status" value="1"/>
</dbReference>
<proteinExistence type="inferred from homology"/>
<protein>
    <recommendedName>
        <fullName evidence="1">Chaperonin GroEL</fullName>
        <ecNumber evidence="1">5.6.1.7</ecNumber>
    </recommendedName>
    <alternativeName>
        <fullName evidence="1">60 kDa chaperonin</fullName>
    </alternativeName>
    <alternativeName>
        <fullName evidence="1">Chaperonin-60</fullName>
        <shortName evidence="1">Cpn60</shortName>
    </alternativeName>
</protein>
<name>CH60_BRUSI</name>
<accession>A9WXQ0</accession>
<comment type="function">
    <text evidence="1">Together with its co-chaperonin GroES, plays an essential role in assisting protein folding. The GroEL-GroES system forms a nano-cage that allows encapsulation of the non-native substrate proteins and provides a physical environment optimized to promote and accelerate protein folding.</text>
</comment>
<comment type="catalytic activity">
    <reaction evidence="1">
        <text>ATP + H2O + a folded polypeptide = ADP + phosphate + an unfolded polypeptide.</text>
        <dbReference type="EC" id="5.6.1.7"/>
    </reaction>
</comment>
<comment type="subunit">
    <text evidence="1">Forms a cylinder of 14 subunits composed of two heptameric rings stacked back-to-back. Interacts with the co-chaperonin GroES.</text>
</comment>
<comment type="subcellular location">
    <subcellularLocation>
        <location evidence="1">Cytoplasm</location>
    </subcellularLocation>
</comment>
<comment type="similarity">
    <text evidence="1">Belongs to the chaperonin (HSP60) family.</text>
</comment>